<name>KAP0_MOUSE</name>
<dbReference type="EMBL" id="AK005039">
    <property type="protein sequence ID" value="BAB23766.1"/>
    <property type="molecule type" value="mRNA"/>
</dbReference>
<dbReference type="EMBL" id="AK027916">
    <property type="protein sequence ID" value="BAC25664.1"/>
    <property type="molecule type" value="mRNA"/>
</dbReference>
<dbReference type="EMBL" id="AK051068">
    <property type="protein sequence ID" value="BAC34516.1"/>
    <property type="molecule type" value="mRNA"/>
</dbReference>
<dbReference type="EMBL" id="AK145797">
    <property type="protein sequence ID" value="BAE26655.1"/>
    <property type="molecule type" value="mRNA"/>
</dbReference>
<dbReference type="EMBL" id="AK145860">
    <property type="protein sequence ID" value="BAE26704.1"/>
    <property type="molecule type" value="mRNA"/>
</dbReference>
<dbReference type="EMBL" id="AK147188">
    <property type="protein sequence ID" value="BAE27748.1"/>
    <property type="molecule type" value="mRNA"/>
</dbReference>
<dbReference type="EMBL" id="AK150427">
    <property type="protein sequence ID" value="BAE29550.1"/>
    <property type="molecule type" value="mRNA"/>
</dbReference>
<dbReference type="EMBL" id="AK151124">
    <property type="protein sequence ID" value="BAE30132.1"/>
    <property type="molecule type" value="mRNA"/>
</dbReference>
<dbReference type="EMBL" id="AK153227">
    <property type="protein sequence ID" value="BAE31820.1"/>
    <property type="molecule type" value="mRNA"/>
</dbReference>
<dbReference type="EMBL" id="BC003461">
    <property type="protein sequence ID" value="AAH03461.1"/>
    <property type="molecule type" value="mRNA"/>
</dbReference>
<dbReference type="EMBL" id="BC005697">
    <property type="protein sequence ID" value="AAH05697.1"/>
    <property type="molecule type" value="mRNA"/>
</dbReference>
<dbReference type="EMBL" id="AJ278427">
    <property type="protein sequence ID" value="CAB94778.1"/>
    <property type="molecule type" value="Genomic_DNA"/>
</dbReference>
<dbReference type="EMBL" id="AJ278429">
    <property type="protein sequence ID" value="CAB94718.1"/>
    <property type="molecule type" value="Genomic_DNA"/>
</dbReference>
<dbReference type="CCDS" id="CCDS25583.1"/>
<dbReference type="RefSeq" id="NP_001300902.1">
    <property type="nucleotide sequence ID" value="NM_001313973.2"/>
</dbReference>
<dbReference type="RefSeq" id="NP_001300903.1">
    <property type="nucleotide sequence ID" value="NM_001313974.2"/>
</dbReference>
<dbReference type="RefSeq" id="NP_001300904.1">
    <property type="nucleotide sequence ID" value="NM_001313975.2"/>
</dbReference>
<dbReference type="RefSeq" id="NP_001300905.1">
    <property type="nucleotide sequence ID" value="NM_001313976.2"/>
</dbReference>
<dbReference type="RefSeq" id="NP_001349606.1">
    <property type="nucleotide sequence ID" value="NM_001362677.1"/>
</dbReference>
<dbReference type="RefSeq" id="NP_001360841.1">
    <property type="nucleotide sequence ID" value="NM_001373912.1"/>
</dbReference>
<dbReference type="RefSeq" id="NP_001360842.1">
    <property type="nucleotide sequence ID" value="NM_001373913.1"/>
</dbReference>
<dbReference type="RefSeq" id="NP_068680.1">
    <property type="nucleotide sequence ID" value="NM_021880.4"/>
</dbReference>
<dbReference type="RefSeq" id="XP_017169829.1">
    <property type="nucleotide sequence ID" value="XM_017314340.1"/>
</dbReference>
<dbReference type="RefSeq" id="XP_036012323.1">
    <property type="nucleotide sequence ID" value="XM_036156430.1"/>
</dbReference>
<dbReference type="SMR" id="Q9DBC7"/>
<dbReference type="BioGRID" id="202365">
    <property type="interactions" value="11"/>
</dbReference>
<dbReference type="DIP" id="DIP-32450N"/>
<dbReference type="FunCoup" id="Q9DBC7">
    <property type="interactions" value="1919"/>
</dbReference>
<dbReference type="IntAct" id="Q9DBC7">
    <property type="interactions" value="15"/>
</dbReference>
<dbReference type="MINT" id="Q9DBC7"/>
<dbReference type="STRING" id="10090.ENSMUSP00000102288"/>
<dbReference type="GlyGen" id="Q9DBC7">
    <property type="glycosylation" value="1 site, 1 O-linked glycan (1 site)"/>
</dbReference>
<dbReference type="iPTMnet" id="Q9DBC7"/>
<dbReference type="PhosphoSitePlus" id="Q9DBC7"/>
<dbReference type="SwissPalm" id="Q9DBC7"/>
<dbReference type="REPRODUCTION-2DPAGE" id="IPI00762049"/>
<dbReference type="REPRODUCTION-2DPAGE" id="Q9DBC7"/>
<dbReference type="jPOST" id="Q9DBC7"/>
<dbReference type="PaxDb" id="10090-ENSMUSP00000056500"/>
<dbReference type="ProteomicsDB" id="268956"/>
<dbReference type="Pumba" id="Q9DBC7"/>
<dbReference type="Antibodypedia" id="31783">
    <property type="antibodies" value="384 antibodies from 35 providers"/>
</dbReference>
<dbReference type="DNASU" id="19084"/>
<dbReference type="Ensembl" id="ENSMUST00000049527.7">
    <property type="protein sequence ID" value="ENSMUSP00000056500.7"/>
    <property type="gene ID" value="ENSMUSG00000020612.17"/>
</dbReference>
<dbReference type="Ensembl" id="ENSMUST00000106677.8">
    <property type="protein sequence ID" value="ENSMUSP00000102288.2"/>
    <property type="gene ID" value="ENSMUSG00000020612.17"/>
</dbReference>
<dbReference type="GeneID" id="19084"/>
<dbReference type="KEGG" id="mmu:19084"/>
<dbReference type="UCSC" id="uc007mcu.1">
    <property type="organism name" value="mouse"/>
</dbReference>
<dbReference type="AGR" id="MGI:104878"/>
<dbReference type="CTD" id="5573"/>
<dbReference type="MGI" id="MGI:104878">
    <property type="gene designation" value="Prkar1a"/>
</dbReference>
<dbReference type="VEuPathDB" id="HostDB:ENSMUSG00000020612"/>
<dbReference type="eggNOG" id="KOG1113">
    <property type="taxonomic scope" value="Eukaryota"/>
</dbReference>
<dbReference type="GeneTree" id="ENSGT00940000155148"/>
<dbReference type="HOGENOM" id="CLU_018310_1_0_1"/>
<dbReference type="InParanoid" id="Q9DBC7"/>
<dbReference type="OMA" id="DQWERAN"/>
<dbReference type="PhylomeDB" id="Q9DBC7"/>
<dbReference type="TreeFam" id="TF314920"/>
<dbReference type="Reactome" id="R-MMU-163615">
    <property type="pathway name" value="PKA activation"/>
</dbReference>
<dbReference type="Reactome" id="R-MMU-164378">
    <property type="pathway name" value="PKA activation in glucagon signalling"/>
</dbReference>
<dbReference type="Reactome" id="R-MMU-180024">
    <property type="pathway name" value="DARPP-32 events"/>
</dbReference>
<dbReference type="Reactome" id="R-MMU-432040">
    <property type="pathway name" value="Vasopressin regulates renal water homeostasis via Aquaporins"/>
</dbReference>
<dbReference type="Reactome" id="R-MMU-442720">
    <property type="pathway name" value="CREB1 phosphorylation through the activation of Adenylate Cyclase"/>
</dbReference>
<dbReference type="Reactome" id="R-MMU-5610787">
    <property type="pathway name" value="Hedgehog 'off' state"/>
</dbReference>
<dbReference type="Reactome" id="R-MMU-9634597">
    <property type="pathway name" value="GPER1 signaling"/>
</dbReference>
<dbReference type="Reactome" id="R-MMU-983231">
    <property type="pathway name" value="Factors involved in megakaryocyte development and platelet production"/>
</dbReference>
<dbReference type="Reactome" id="R-MMU-9856530">
    <property type="pathway name" value="High laminar flow shear stress activates signaling by PIEZO1 and PECAM1:CDH5:KDR in endothelial cells"/>
</dbReference>
<dbReference type="BioGRID-ORCS" id="19084">
    <property type="hits" value="20 hits in 82 CRISPR screens"/>
</dbReference>
<dbReference type="CD-CODE" id="CE726F99">
    <property type="entry name" value="Postsynaptic density"/>
</dbReference>
<dbReference type="ChiTaRS" id="Prkar1a">
    <property type="organism name" value="mouse"/>
</dbReference>
<dbReference type="PRO" id="PR:Q9DBC7"/>
<dbReference type="Proteomes" id="UP000000589">
    <property type="component" value="Chromosome 11"/>
</dbReference>
<dbReference type="RNAct" id="Q9DBC7">
    <property type="molecule type" value="protein"/>
</dbReference>
<dbReference type="Bgee" id="ENSMUSG00000020612">
    <property type="expression patterns" value="Expressed in subparaventricular zone and 291 other cell types or tissues"/>
</dbReference>
<dbReference type="ExpressionAtlas" id="Q9DBC7">
    <property type="expression patterns" value="baseline and differential"/>
</dbReference>
<dbReference type="GO" id="GO:0005930">
    <property type="term" value="C:axoneme"/>
    <property type="evidence" value="ECO:0007669"/>
    <property type="project" value="Ensembl"/>
</dbReference>
<dbReference type="GO" id="GO:0005952">
    <property type="term" value="C:cAMP-dependent protein kinase complex"/>
    <property type="evidence" value="ECO:0000314"/>
    <property type="project" value="MGI"/>
</dbReference>
<dbReference type="GO" id="GO:0005813">
    <property type="term" value="C:centrosome"/>
    <property type="evidence" value="ECO:0000314"/>
    <property type="project" value="MGI"/>
</dbReference>
<dbReference type="GO" id="GO:0005737">
    <property type="term" value="C:cytoplasm"/>
    <property type="evidence" value="ECO:0000314"/>
    <property type="project" value="MGI"/>
</dbReference>
<dbReference type="GO" id="GO:0005829">
    <property type="term" value="C:cytosol"/>
    <property type="evidence" value="ECO:0000314"/>
    <property type="project" value="MGI"/>
</dbReference>
<dbReference type="GO" id="GO:0098978">
    <property type="term" value="C:glutamatergic synapse"/>
    <property type="evidence" value="ECO:0000314"/>
    <property type="project" value="SynGO"/>
</dbReference>
<dbReference type="GO" id="GO:0001772">
    <property type="term" value="C:immunological synapse"/>
    <property type="evidence" value="ECO:0007669"/>
    <property type="project" value="Ensembl"/>
</dbReference>
<dbReference type="GO" id="GO:0005771">
    <property type="term" value="C:multivesicular body"/>
    <property type="evidence" value="ECO:0000314"/>
    <property type="project" value="MGI"/>
</dbReference>
<dbReference type="GO" id="GO:0031594">
    <property type="term" value="C:neuromuscular junction"/>
    <property type="evidence" value="ECO:0000314"/>
    <property type="project" value="MGI"/>
</dbReference>
<dbReference type="GO" id="GO:0031588">
    <property type="term" value="C:nucleotide-activated protein kinase complex"/>
    <property type="evidence" value="ECO:0007669"/>
    <property type="project" value="Ensembl"/>
</dbReference>
<dbReference type="GO" id="GO:0044853">
    <property type="term" value="C:plasma membrane raft"/>
    <property type="evidence" value="ECO:0007669"/>
    <property type="project" value="Ensembl"/>
</dbReference>
<dbReference type="GO" id="GO:0120212">
    <property type="term" value="C:sperm head-tail coupling apparatus"/>
    <property type="evidence" value="ECO:0000314"/>
    <property type="project" value="MGI"/>
</dbReference>
<dbReference type="GO" id="GO:0045202">
    <property type="term" value="C:synapse"/>
    <property type="evidence" value="ECO:0000314"/>
    <property type="project" value="SynGO"/>
</dbReference>
<dbReference type="GO" id="GO:0030552">
    <property type="term" value="F:cAMP binding"/>
    <property type="evidence" value="ECO:0007669"/>
    <property type="project" value="UniProtKB-KW"/>
</dbReference>
<dbReference type="GO" id="GO:0004862">
    <property type="term" value="F:cAMP-dependent protein kinase inhibitor activity"/>
    <property type="evidence" value="ECO:0000315"/>
    <property type="project" value="MGI"/>
</dbReference>
<dbReference type="GO" id="GO:0008603">
    <property type="term" value="F:cAMP-dependent protein kinase regulator activity"/>
    <property type="evidence" value="ECO:0000314"/>
    <property type="project" value="MGI"/>
</dbReference>
<dbReference type="GO" id="GO:0019904">
    <property type="term" value="F:protein domain specific binding"/>
    <property type="evidence" value="ECO:0007669"/>
    <property type="project" value="Ensembl"/>
</dbReference>
<dbReference type="GO" id="GO:0034236">
    <property type="term" value="F:protein kinase A catalytic subunit binding"/>
    <property type="evidence" value="ECO:0000353"/>
    <property type="project" value="MGI"/>
</dbReference>
<dbReference type="GO" id="GO:0031625">
    <property type="term" value="F:ubiquitin protein ligase binding"/>
    <property type="evidence" value="ECO:0007669"/>
    <property type="project" value="Ensembl"/>
</dbReference>
<dbReference type="GO" id="GO:0007189">
    <property type="term" value="P:adenylate cyclase-activating G protein-coupled receptor signaling pathway"/>
    <property type="evidence" value="ECO:0000315"/>
    <property type="project" value="MGI"/>
</dbReference>
<dbReference type="GO" id="GO:0009887">
    <property type="term" value="P:animal organ morphogenesis"/>
    <property type="evidence" value="ECO:0000304"/>
    <property type="project" value="MGI"/>
</dbReference>
<dbReference type="GO" id="GO:0060038">
    <property type="term" value="P:cardiac muscle cell proliferation"/>
    <property type="evidence" value="ECO:0000315"/>
    <property type="project" value="MGI"/>
</dbReference>
<dbReference type="GO" id="GO:0071377">
    <property type="term" value="P:cellular response to glucagon stimulus"/>
    <property type="evidence" value="ECO:0000315"/>
    <property type="project" value="MGI"/>
</dbReference>
<dbReference type="GO" id="GO:0007507">
    <property type="term" value="P:heart development"/>
    <property type="evidence" value="ECO:0000315"/>
    <property type="project" value="MGI"/>
</dbReference>
<dbReference type="GO" id="GO:0010463">
    <property type="term" value="P:mesenchymal cell proliferation"/>
    <property type="evidence" value="ECO:0000304"/>
    <property type="project" value="MGI"/>
</dbReference>
<dbReference type="GO" id="GO:0001707">
    <property type="term" value="P:mesoderm formation"/>
    <property type="evidence" value="ECO:0000315"/>
    <property type="project" value="MGI"/>
</dbReference>
<dbReference type="GO" id="GO:0046007">
    <property type="term" value="P:negative regulation of activated T cell proliferation"/>
    <property type="evidence" value="ECO:0007669"/>
    <property type="project" value="Ensembl"/>
</dbReference>
<dbReference type="GO" id="GO:0141162">
    <property type="term" value="P:negative regulation of cAMP/PKA signal transduction"/>
    <property type="evidence" value="ECO:0007669"/>
    <property type="project" value="Ensembl"/>
</dbReference>
<dbReference type="GO" id="GO:0010629">
    <property type="term" value="P:negative regulation of gene expression"/>
    <property type="evidence" value="ECO:0007669"/>
    <property type="project" value="Ensembl"/>
</dbReference>
<dbReference type="GO" id="GO:0032024">
    <property type="term" value="P:positive regulation of insulin secretion"/>
    <property type="evidence" value="ECO:0000315"/>
    <property type="project" value="MGI"/>
</dbReference>
<dbReference type="GO" id="GO:0045214">
    <property type="term" value="P:sarcomere organization"/>
    <property type="evidence" value="ECO:0000315"/>
    <property type="project" value="MGI"/>
</dbReference>
<dbReference type="CDD" id="cd00038">
    <property type="entry name" value="CAP_ED"/>
    <property type="match status" value="2"/>
</dbReference>
<dbReference type="CDD" id="cd12101">
    <property type="entry name" value="DD_RIalpha_PKA"/>
    <property type="match status" value="1"/>
</dbReference>
<dbReference type="FunFam" id="2.60.120.10:FF:000013">
    <property type="entry name" value="cAMP-dependent protein kinase type I regulatory subunit"/>
    <property type="match status" value="1"/>
</dbReference>
<dbReference type="FunFam" id="1.20.890.10:FF:000001">
    <property type="entry name" value="cAMP-dependent protein kinase type I-alpha regulatory subunit"/>
    <property type="match status" value="1"/>
</dbReference>
<dbReference type="FunFam" id="2.60.120.10:FF:000006">
    <property type="entry name" value="cAMP-dependent protein kinase type I-alpha regulatory subunit"/>
    <property type="match status" value="1"/>
</dbReference>
<dbReference type="Gene3D" id="1.20.890.10">
    <property type="entry name" value="cAMP-dependent protein kinase regulatory subunit, dimerization-anchoring domain"/>
    <property type="match status" value="1"/>
</dbReference>
<dbReference type="Gene3D" id="2.60.120.10">
    <property type="entry name" value="Jelly Rolls"/>
    <property type="match status" value="2"/>
</dbReference>
<dbReference type="InterPro" id="IPR050503">
    <property type="entry name" value="cAMP-dep_PK_reg_su-like"/>
</dbReference>
<dbReference type="InterPro" id="IPR003117">
    <property type="entry name" value="cAMP_dep_PK_reg_su_I/II_a/b"/>
</dbReference>
<dbReference type="InterPro" id="IPR018488">
    <property type="entry name" value="cNMP-bd_CS"/>
</dbReference>
<dbReference type="InterPro" id="IPR000595">
    <property type="entry name" value="cNMP-bd_dom"/>
</dbReference>
<dbReference type="InterPro" id="IPR018490">
    <property type="entry name" value="cNMP-bd_dom_sf"/>
</dbReference>
<dbReference type="InterPro" id="IPR014710">
    <property type="entry name" value="RmlC-like_jellyroll"/>
</dbReference>
<dbReference type="PANTHER" id="PTHR11635">
    <property type="entry name" value="CAMP-DEPENDENT PROTEIN KINASE REGULATORY CHAIN"/>
    <property type="match status" value="1"/>
</dbReference>
<dbReference type="PANTHER" id="PTHR11635:SF129">
    <property type="entry name" value="CAMP-DEPENDENT PROTEIN KINASE TYPE I-ALPHA REGULATORY SUBUNIT"/>
    <property type="match status" value="1"/>
</dbReference>
<dbReference type="Pfam" id="PF00027">
    <property type="entry name" value="cNMP_binding"/>
    <property type="match status" value="2"/>
</dbReference>
<dbReference type="Pfam" id="PF02197">
    <property type="entry name" value="RIIa"/>
    <property type="match status" value="1"/>
</dbReference>
<dbReference type="PRINTS" id="PR00103">
    <property type="entry name" value="CAMPKINASE"/>
</dbReference>
<dbReference type="SMART" id="SM00100">
    <property type="entry name" value="cNMP"/>
    <property type="match status" value="2"/>
</dbReference>
<dbReference type="SMART" id="SM00394">
    <property type="entry name" value="RIIa"/>
    <property type="match status" value="1"/>
</dbReference>
<dbReference type="SUPFAM" id="SSF51206">
    <property type="entry name" value="cAMP-binding domain-like"/>
    <property type="match status" value="2"/>
</dbReference>
<dbReference type="SUPFAM" id="SSF47391">
    <property type="entry name" value="Dimerization-anchoring domain of cAMP-dependent PK regulatory subunit"/>
    <property type="match status" value="1"/>
</dbReference>
<dbReference type="PROSITE" id="PS00888">
    <property type="entry name" value="CNMP_BINDING_1"/>
    <property type="match status" value="2"/>
</dbReference>
<dbReference type="PROSITE" id="PS00889">
    <property type="entry name" value="CNMP_BINDING_2"/>
    <property type="match status" value="2"/>
</dbReference>
<dbReference type="PROSITE" id="PS50042">
    <property type="entry name" value="CNMP_BINDING_3"/>
    <property type="match status" value="2"/>
</dbReference>
<gene>
    <name type="primary">Prkar1a</name>
</gene>
<feature type="chain" id="PRO_0000421786" description="cAMP-dependent protein kinase type I-alpha regulatory subunit">
    <location>
        <begin position="1"/>
        <end position="381"/>
    </location>
</feature>
<feature type="initiator methionine" description="Removed; alternate" evidence="2">
    <location>
        <position position="1"/>
    </location>
</feature>
<feature type="chain" id="PRO_0000205378" description="cAMP-dependent protein kinase type I-alpha regulatory subunit, N-terminally processed">
    <location>
        <begin position="2"/>
        <end position="381"/>
    </location>
</feature>
<feature type="region of interest" description="Dimerization and phosphorylation">
    <location>
        <begin position="2"/>
        <end position="136"/>
    </location>
</feature>
<feature type="region of interest" description="Disordered" evidence="5">
    <location>
        <begin position="73"/>
        <end position="96"/>
    </location>
</feature>
<feature type="short sequence motif" description="Pseudophosphorylation motif">
    <location>
        <begin position="96"/>
        <end position="100"/>
    </location>
</feature>
<feature type="binding site">
    <location>
        <begin position="137"/>
        <end position="254"/>
    </location>
    <ligand>
        <name>3',5'-cyclic AMP</name>
        <dbReference type="ChEBI" id="CHEBI:58165"/>
        <label>1</label>
    </ligand>
</feature>
<feature type="binding site">
    <location>
        <position position="202"/>
    </location>
    <ligand>
        <name>3',5'-cyclic AMP</name>
        <dbReference type="ChEBI" id="CHEBI:58165"/>
        <label>1</label>
    </ligand>
</feature>
<feature type="binding site">
    <location>
        <position position="211"/>
    </location>
    <ligand>
        <name>3',5'-cyclic AMP</name>
        <dbReference type="ChEBI" id="CHEBI:58165"/>
        <label>1</label>
    </ligand>
</feature>
<feature type="binding site">
    <location>
        <begin position="255"/>
        <end position="381"/>
    </location>
    <ligand>
        <name>3',5'-cyclic AMP</name>
        <dbReference type="ChEBI" id="CHEBI:58165"/>
        <label>2</label>
    </ligand>
</feature>
<feature type="binding site">
    <location>
        <position position="326"/>
    </location>
    <ligand>
        <name>3',5'-cyclic AMP</name>
        <dbReference type="ChEBI" id="CHEBI:58165"/>
        <label>2</label>
    </ligand>
</feature>
<feature type="binding site">
    <location>
        <position position="335"/>
    </location>
    <ligand>
        <name>3',5'-cyclic AMP</name>
        <dbReference type="ChEBI" id="CHEBI:58165"/>
        <label>2</label>
    </ligand>
</feature>
<feature type="modified residue" description="N-acetylmethionine" evidence="4">
    <location>
        <position position="1"/>
    </location>
</feature>
<feature type="modified residue" description="N-acetylalanine; in cAMP-dependent protein kinase type I-alpha regulatory subunit, N-terminally processed" evidence="2">
    <location>
        <position position="2"/>
    </location>
</feature>
<feature type="modified residue" description="Phosphoserine" evidence="3">
    <location>
        <position position="3"/>
    </location>
</feature>
<feature type="modified residue" description="Phosphothreonine" evidence="4">
    <location>
        <position position="75"/>
    </location>
</feature>
<feature type="modified residue" description="Phosphoserine" evidence="4">
    <location>
        <position position="77"/>
    </location>
</feature>
<feature type="modified residue" description="Phosphoserine" evidence="8 9 10">
    <location>
        <position position="83"/>
    </location>
</feature>
<feature type="modified residue" description="Phosphoserine" evidence="7">
    <location>
        <position position="101"/>
    </location>
</feature>
<feature type="modified residue" description="Phosphoserine" evidence="3">
    <location>
        <position position="258"/>
    </location>
</feature>
<feature type="disulfide bond" description="Interchain (with C-39)" evidence="1">
    <location>
        <position position="18"/>
    </location>
</feature>
<feature type="disulfide bond" description="Interchain (with C-18)" evidence="1">
    <location>
        <position position="39"/>
    </location>
</feature>
<evidence type="ECO:0000250" key="1"/>
<evidence type="ECO:0000250" key="2">
    <source>
        <dbReference type="UniProtKB" id="P00514"/>
    </source>
</evidence>
<evidence type="ECO:0000250" key="3">
    <source>
        <dbReference type="UniProtKB" id="P09456"/>
    </source>
</evidence>
<evidence type="ECO:0000250" key="4">
    <source>
        <dbReference type="UniProtKB" id="P10644"/>
    </source>
</evidence>
<evidence type="ECO:0000256" key="5">
    <source>
        <dbReference type="SAM" id="MobiDB-lite"/>
    </source>
</evidence>
<evidence type="ECO:0000305" key="6"/>
<evidence type="ECO:0007744" key="7">
    <source>
    </source>
</evidence>
<evidence type="ECO:0007744" key="8">
    <source>
    </source>
</evidence>
<evidence type="ECO:0007744" key="9">
    <source>
    </source>
</evidence>
<evidence type="ECO:0007744" key="10">
    <source>
    </source>
</evidence>
<protein>
    <recommendedName>
        <fullName>cAMP-dependent protein kinase type I-alpha regulatory subunit</fullName>
    </recommendedName>
    <component>
        <recommendedName>
            <fullName>cAMP-dependent protein kinase type I-alpha regulatory subunit, N-terminally processed</fullName>
        </recommendedName>
    </component>
</protein>
<reference key="1">
    <citation type="journal article" date="2005" name="Science">
        <title>The transcriptional landscape of the mammalian genome.</title>
        <authorList>
            <person name="Carninci P."/>
            <person name="Kasukawa T."/>
            <person name="Katayama S."/>
            <person name="Gough J."/>
            <person name="Frith M.C."/>
            <person name="Maeda N."/>
            <person name="Oyama R."/>
            <person name="Ravasi T."/>
            <person name="Lenhard B."/>
            <person name="Wells C."/>
            <person name="Kodzius R."/>
            <person name="Shimokawa K."/>
            <person name="Bajic V.B."/>
            <person name="Brenner S.E."/>
            <person name="Batalov S."/>
            <person name="Forrest A.R."/>
            <person name="Zavolan M."/>
            <person name="Davis M.J."/>
            <person name="Wilming L.G."/>
            <person name="Aidinis V."/>
            <person name="Allen J.E."/>
            <person name="Ambesi-Impiombato A."/>
            <person name="Apweiler R."/>
            <person name="Aturaliya R.N."/>
            <person name="Bailey T.L."/>
            <person name="Bansal M."/>
            <person name="Baxter L."/>
            <person name="Beisel K.W."/>
            <person name="Bersano T."/>
            <person name="Bono H."/>
            <person name="Chalk A.M."/>
            <person name="Chiu K.P."/>
            <person name="Choudhary V."/>
            <person name="Christoffels A."/>
            <person name="Clutterbuck D.R."/>
            <person name="Crowe M.L."/>
            <person name="Dalla E."/>
            <person name="Dalrymple B.P."/>
            <person name="de Bono B."/>
            <person name="Della Gatta G."/>
            <person name="di Bernardo D."/>
            <person name="Down T."/>
            <person name="Engstrom P."/>
            <person name="Fagiolini M."/>
            <person name="Faulkner G."/>
            <person name="Fletcher C.F."/>
            <person name="Fukushima T."/>
            <person name="Furuno M."/>
            <person name="Futaki S."/>
            <person name="Gariboldi M."/>
            <person name="Georgii-Hemming P."/>
            <person name="Gingeras T.R."/>
            <person name="Gojobori T."/>
            <person name="Green R.E."/>
            <person name="Gustincich S."/>
            <person name="Harbers M."/>
            <person name="Hayashi Y."/>
            <person name="Hensch T.K."/>
            <person name="Hirokawa N."/>
            <person name="Hill D."/>
            <person name="Huminiecki L."/>
            <person name="Iacono M."/>
            <person name="Ikeo K."/>
            <person name="Iwama A."/>
            <person name="Ishikawa T."/>
            <person name="Jakt M."/>
            <person name="Kanapin A."/>
            <person name="Katoh M."/>
            <person name="Kawasawa Y."/>
            <person name="Kelso J."/>
            <person name="Kitamura H."/>
            <person name="Kitano H."/>
            <person name="Kollias G."/>
            <person name="Krishnan S.P."/>
            <person name="Kruger A."/>
            <person name="Kummerfeld S.K."/>
            <person name="Kurochkin I.V."/>
            <person name="Lareau L.F."/>
            <person name="Lazarevic D."/>
            <person name="Lipovich L."/>
            <person name="Liu J."/>
            <person name="Liuni S."/>
            <person name="McWilliam S."/>
            <person name="Madan Babu M."/>
            <person name="Madera M."/>
            <person name="Marchionni L."/>
            <person name="Matsuda H."/>
            <person name="Matsuzawa S."/>
            <person name="Miki H."/>
            <person name="Mignone F."/>
            <person name="Miyake S."/>
            <person name="Morris K."/>
            <person name="Mottagui-Tabar S."/>
            <person name="Mulder N."/>
            <person name="Nakano N."/>
            <person name="Nakauchi H."/>
            <person name="Ng P."/>
            <person name="Nilsson R."/>
            <person name="Nishiguchi S."/>
            <person name="Nishikawa S."/>
            <person name="Nori F."/>
            <person name="Ohara O."/>
            <person name="Okazaki Y."/>
            <person name="Orlando V."/>
            <person name="Pang K.C."/>
            <person name="Pavan W.J."/>
            <person name="Pavesi G."/>
            <person name="Pesole G."/>
            <person name="Petrovsky N."/>
            <person name="Piazza S."/>
            <person name="Reed J."/>
            <person name="Reid J.F."/>
            <person name="Ring B.Z."/>
            <person name="Ringwald M."/>
            <person name="Rost B."/>
            <person name="Ruan Y."/>
            <person name="Salzberg S.L."/>
            <person name="Sandelin A."/>
            <person name="Schneider C."/>
            <person name="Schoenbach C."/>
            <person name="Sekiguchi K."/>
            <person name="Semple C.A."/>
            <person name="Seno S."/>
            <person name="Sessa L."/>
            <person name="Sheng Y."/>
            <person name="Shibata Y."/>
            <person name="Shimada H."/>
            <person name="Shimada K."/>
            <person name="Silva D."/>
            <person name="Sinclair B."/>
            <person name="Sperling S."/>
            <person name="Stupka E."/>
            <person name="Sugiura K."/>
            <person name="Sultana R."/>
            <person name="Takenaka Y."/>
            <person name="Taki K."/>
            <person name="Tammoja K."/>
            <person name="Tan S.L."/>
            <person name="Tang S."/>
            <person name="Taylor M.S."/>
            <person name="Tegner J."/>
            <person name="Teichmann S.A."/>
            <person name="Ueda H.R."/>
            <person name="van Nimwegen E."/>
            <person name="Verardo R."/>
            <person name="Wei C.L."/>
            <person name="Yagi K."/>
            <person name="Yamanishi H."/>
            <person name="Zabarovsky E."/>
            <person name="Zhu S."/>
            <person name="Zimmer A."/>
            <person name="Hide W."/>
            <person name="Bult C."/>
            <person name="Grimmond S.M."/>
            <person name="Teasdale R.D."/>
            <person name="Liu E.T."/>
            <person name="Brusic V."/>
            <person name="Quackenbush J."/>
            <person name="Wahlestedt C."/>
            <person name="Mattick J.S."/>
            <person name="Hume D.A."/>
            <person name="Kai C."/>
            <person name="Sasaki D."/>
            <person name="Tomaru Y."/>
            <person name="Fukuda S."/>
            <person name="Kanamori-Katayama M."/>
            <person name="Suzuki M."/>
            <person name="Aoki J."/>
            <person name="Arakawa T."/>
            <person name="Iida J."/>
            <person name="Imamura K."/>
            <person name="Itoh M."/>
            <person name="Kato T."/>
            <person name="Kawaji H."/>
            <person name="Kawagashira N."/>
            <person name="Kawashima T."/>
            <person name="Kojima M."/>
            <person name="Kondo S."/>
            <person name="Konno H."/>
            <person name="Nakano K."/>
            <person name="Ninomiya N."/>
            <person name="Nishio T."/>
            <person name="Okada M."/>
            <person name="Plessy C."/>
            <person name="Shibata K."/>
            <person name="Shiraki T."/>
            <person name="Suzuki S."/>
            <person name="Tagami M."/>
            <person name="Waki K."/>
            <person name="Watahiki A."/>
            <person name="Okamura-Oho Y."/>
            <person name="Suzuki H."/>
            <person name="Kawai J."/>
            <person name="Hayashizaki Y."/>
        </authorList>
    </citation>
    <scope>NUCLEOTIDE SEQUENCE [LARGE SCALE MRNA]</scope>
    <source>
        <strain>C57BL/6J</strain>
        <tissue>Bone marrow</tissue>
        <tissue>Kidney</tissue>
        <tissue>Liver</tissue>
        <tissue>Placenta</tissue>
    </source>
</reference>
<reference key="2">
    <citation type="journal article" date="2004" name="Genome Res.">
        <title>The status, quality, and expansion of the NIH full-length cDNA project: the Mammalian Gene Collection (MGC).</title>
        <authorList>
            <consortium name="The MGC Project Team"/>
        </authorList>
    </citation>
    <scope>NUCLEOTIDE SEQUENCE [LARGE SCALE MRNA]</scope>
    <source>
        <strain>FVB/N</strain>
        <tissue>Mammary tumor</tissue>
    </source>
</reference>
<reference key="3">
    <citation type="journal article" date="2000" name="FEBS Lett.">
        <title>Alternative 5'-exons of the mouse cAMP-dependent protein kinase subunit RIalpha gene are conserved and expressed in both a ubiquitous and tissue-restricted fashion.</title>
        <authorList>
            <person name="Barradeau S."/>
            <person name="Imaizumi-Scherrer T."/>
            <person name="Weiss M.C."/>
            <person name="Faust D.M."/>
        </authorList>
    </citation>
    <scope>NUCLEOTIDE SEQUENCE [GENOMIC DNA] OF 1-60 AND 259-382</scope>
</reference>
<reference key="4">
    <citation type="journal article" date="1998" name="J. Biol. Chem.">
        <title>Identification of tethering domains for protein kinase A type Ialpha regulatory subunits on sperm fibrous sheath protein FSC1.</title>
        <authorList>
            <person name="Miki K."/>
            <person name="Eddy E.M."/>
        </authorList>
    </citation>
    <scope>INTERACTION WITH AKAP4</scope>
</reference>
<reference key="5">
    <citation type="journal article" date="2004" name="Mol. Cell. Proteomics">
        <title>Phosphoproteomic analysis of the developing mouse brain.</title>
        <authorList>
            <person name="Ballif B.A."/>
            <person name="Villen J."/>
            <person name="Beausoleil S.A."/>
            <person name="Schwartz D."/>
            <person name="Gygi S.P."/>
        </authorList>
    </citation>
    <scope>PHOSPHORYLATION [LARGE SCALE ANALYSIS] AT SER-101</scope>
    <scope>IDENTIFICATION BY MASS SPECTROMETRY [LARGE SCALE ANALYSIS]</scope>
    <source>
        <tissue>Embryonic brain</tissue>
    </source>
</reference>
<reference key="6">
    <citation type="journal article" date="2007" name="Proc. Natl. Acad. Sci. U.S.A.">
        <title>Large-scale phosphorylation analysis of mouse liver.</title>
        <authorList>
            <person name="Villen J."/>
            <person name="Beausoleil S.A."/>
            <person name="Gerber S.A."/>
            <person name="Gygi S.P."/>
        </authorList>
    </citation>
    <scope>PHOSPHORYLATION [LARGE SCALE ANALYSIS] AT SER-83</scope>
    <scope>IDENTIFICATION BY MASS SPECTROMETRY [LARGE SCALE ANALYSIS]</scope>
    <source>
        <tissue>Liver</tissue>
    </source>
</reference>
<reference key="7">
    <citation type="journal article" date="2008" name="J. Proteome Res.">
        <title>Specific phosphopeptide enrichment with immobilized titanium ion affinity chromatography adsorbent for phosphoproteome analysis.</title>
        <authorList>
            <person name="Zhou H."/>
            <person name="Ye M."/>
            <person name="Dong J."/>
            <person name="Han G."/>
            <person name="Jiang X."/>
            <person name="Wu R."/>
            <person name="Zou H."/>
        </authorList>
    </citation>
    <scope>IDENTIFICATION BY MASS SPECTROMETRY [LARGE SCALE ANALYSIS]</scope>
    <source>
        <tissue>Liver</tissue>
    </source>
</reference>
<reference key="8">
    <citation type="journal article" date="2009" name="Mol. Cell. Proteomics">
        <title>Large scale localization of protein phosphorylation by use of electron capture dissociation mass spectrometry.</title>
        <authorList>
            <person name="Sweet S.M."/>
            <person name="Bailey C.M."/>
            <person name="Cunningham D.L."/>
            <person name="Heath J.K."/>
            <person name="Cooper H.J."/>
        </authorList>
    </citation>
    <scope>PHOSPHORYLATION [LARGE SCALE ANALYSIS] AT SER-83</scope>
    <scope>IDENTIFICATION BY MASS SPECTROMETRY [LARGE SCALE ANALYSIS]</scope>
    <source>
        <tissue>Embryonic fibroblast</tissue>
    </source>
</reference>
<reference key="9">
    <citation type="journal article" date="2010" name="Cell">
        <title>A tissue-specific atlas of mouse protein phosphorylation and expression.</title>
        <authorList>
            <person name="Huttlin E.L."/>
            <person name="Jedrychowski M.P."/>
            <person name="Elias J.E."/>
            <person name="Goswami T."/>
            <person name="Rad R."/>
            <person name="Beausoleil S.A."/>
            <person name="Villen J."/>
            <person name="Haas W."/>
            <person name="Sowa M.E."/>
            <person name="Gygi S.P."/>
        </authorList>
    </citation>
    <scope>PHOSPHORYLATION [LARGE SCALE ANALYSIS] AT SER-83</scope>
    <scope>IDENTIFICATION BY MASS SPECTROMETRY [LARGE SCALE ANALYSIS]</scope>
    <source>
        <tissue>Brain</tissue>
        <tissue>Brown adipose tissue</tissue>
        <tissue>Heart</tissue>
        <tissue>Kidney</tissue>
        <tissue>Liver</tissue>
        <tissue>Lung</tissue>
        <tissue>Pancreas</tissue>
        <tissue>Spleen</tissue>
        <tissue>Testis</tissue>
    </source>
</reference>
<reference key="10">
    <citation type="journal article" date="2010" name="FEBS Lett.">
        <title>Myeloid translocation gene 16b is a dual A-kinase anchoring protein that interacts selectively with plexins in a phospho-regulated manner.</title>
        <authorList>
            <person name="Fiedler S.E."/>
            <person name="Schillace R.V."/>
            <person name="Daniels C.J."/>
            <person name="Andrews S.F."/>
            <person name="Carr D.W."/>
        </authorList>
    </citation>
    <scope>INTERACTION WITH CBFA2T3</scope>
</reference>
<sequence length="381" mass="43185">MASGSMATSEEERSLRECELYVQKHNIQALLKDSIVQLCTTRPERPMAFLREYFERLEKEEARQIQCLQKTGIRTDSREDEISPPPPNPVVKGRRRRGAISAEVYTEEDAASYVRKVIPKDYKTMAALAKAIEKNVLFSHLDDNERSDIFDAMFPVSFIAGETVIQQGDEGDNFYVIDQGEMDVYVNNEWATSVGEGGSFGELALIYGTPRAATVKAKTNVKLWGIDRDSYRRILMGSTLRKRKMYEEFLSKVSILESLDKWERLTVADALEPVQFEDGQKIVVQGEPGDEFFIILEGTAAVLQRRSENEEFVEVGRLGPSDYFGEIALLMNRPRAATVVARGPLKCVKLDRPRFERVLGPCSDILKRNIQQYNSFVSLSV</sequence>
<keyword id="KW-0007">Acetylation</keyword>
<keyword id="KW-0114">cAMP</keyword>
<keyword id="KW-0116">cAMP-binding</keyword>
<keyword id="KW-1003">Cell membrane</keyword>
<keyword id="KW-1015">Disulfide bond</keyword>
<keyword id="KW-0472">Membrane</keyword>
<keyword id="KW-0547">Nucleotide-binding</keyword>
<keyword id="KW-0597">Phosphoprotein</keyword>
<keyword id="KW-1185">Reference proteome</keyword>
<keyword id="KW-0677">Repeat</keyword>
<organism>
    <name type="scientific">Mus musculus</name>
    <name type="common">Mouse</name>
    <dbReference type="NCBI Taxonomy" id="10090"/>
    <lineage>
        <taxon>Eukaryota</taxon>
        <taxon>Metazoa</taxon>
        <taxon>Chordata</taxon>
        <taxon>Craniata</taxon>
        <taxon>Vertebrata</taxon>
        <taxon>Euteleostomi</taxon>
        <taxon>Mammalia</taxon>
        <taxon>Eutheria</taxon>
        <taxon>Euarchontoglires</taxon>
        <taxon>Glires</taxon>
        <taxon>Rodentia</taxon>
        <taxon>Myomorpha</taxon>
        <taxon>Muroidea</taxon>
        <taxon>Muridae</taxon>
        <taxon>Murinae</taxon>
        <taxon>Mus</taxon>
        <taxon>Mus</taxon>
    </lineage>
</organism>
<comment type="function">
    <text evidence="1">Regulatory subunit of the cAMP-dependent protein kinases involved in cAMP signaling in cells.</text>
</comment>
<comment type="subunit">
    <text evidence="1 4">The inactive holoenzyme is composed of two regulatory chains and two catalytic chains. Activation by cAMP releases the two active catalytic monomers and the regulatory dimer. Interacts with PRKACA and PRKACB (By similarity). PRKAR1A also interacts with RFC2; the complex may be involved in cell survival. Interacts with AKAP4 (PubMed:9852104). Interacts with RARA; the interaction occurs in the presence of cAMP or FSH and regulates RARA transcriptional activity. Interacts with the phosphorylated form of PJA2. Interacts with PRKX; regulates this cAMP-dependent protein kinase (By similarity). Interacts with CBFA2T3 (PubMed:20138877). Interacts with smAKAP; this interaction may target PRKAR1A to the plasma membrane. Interacts with AICDA (By similarity).</text>
</comment>
<comment type="interaction">
    <interactant intactId="EBI-645677">
        <id>Q9DBC7</id>
    </interactant>
    <interactant intactId="EBI-526076">
        <id>O54918-1</id>
        <label>Bcl2l11</label>
    </interactant>
    <organismsDiffer>false</organismsDiffer>
    <experiments>2</experiments>
</comment>
<comment type="subcellular location">
    <subcellularLocation>
        <location evidence="1">Cell membrane</location>
    </subcellularLocation>
</comment>
<comment type="PTM">
    <text evidence="1">The pseudophosphorylation site binds to the substrate-binding region of the catalytic chain, resulting in the inhibition of its activity.</text>
</comment>
<comment type="miscellaneous">
    <text evidence="1">Two types of regulatory chains are found: type I, which predominates in skeletal muscle, and type II, which predominates in cardiac muscle.</text>
</comment>
<comment type="similarity">
    <text evidence="6">Belongs to the cAMP-dependent kinase regulatory chain family.</text>
</comment>
<proteinExistence type="evidence at protein level"/>
<accession>Q9DBC7</accession>
<accession>Q3UKU7</accession>
<accession>Q9JHR5</accession>
<accession>Q9JHR6</accession>